<accession>B1Z3G9</accession>
<proteinExistence type="inferred from homology"/>
<organism>
    <name type="scientific">Burkholderia ambifaria (strain MC40-6)</name>
    <dbReference type="NCBI Taxonomy" id="398577"/>
    <lineage>
        <taxon>Bacteria</taxon>
        <taxon>Pseudomonadati</taxon>
        <taxon>Pseudomonadota</taxon>
        <taxon>Betaproteobacteria</taxon>
        <taxon>Burkholderiales</taxon>
        <taxon>Burkholderiaceae</taxon>
        <taxon>Burkholderia</taxon>
        <taxon>Burkholderia cepacia complex</taxon>
    </lineage>
</organism>
<evidence type="ECO:0000255" key="1">
    <source>
        <dbReference type="HAMAP-Rule" id="MF_01017"/>
    </source>
</evidence>
<reference key="1">
    <citation type="submission" date="2008-04" db="EMBL/GenBank/DDBJ databases">
        <title>Complete sequence of chromosome 3 of Burkholderia ambifaria MC40-6.</title>
        <authorList>
            <person name="Copeland A."/>
            <person name="Lucas S."/>
            <person name="Lapidus A."/>
            <person name="Glavina del Rio T."/>
            <person name="Dalin E."/>
            <person name="Tice H."/>
            <person name="Pitluck S."/>
            <person name="Chain P."/>
            <person name="Malfatti S."/>
            <person name="Shin M."/>
            <person name="Vergez L."/>
            <person name="Lang D."/>
            <person name="Schmutz J."/>
            <person name="Larimer F."/>
            <person name="Land M."/>
            <person name="Hauser L."/>
            <person name="Kyrpides N."/>
            <person name="Lykidis A."/>
            <person name="Ramette A."/>
            <person name="Konstantinidis K."/>
            <person name="Tiedje J."/>
            <person name="Richardson P."/>
        </authorList>
    </citation>
    <scope>NUCLEOTIDE SEQUENCE [LARGE SCALE GENOMIC DNA]</scope>
    <source>
        <strain>MC40-6</strain>
    </source>
</reference>
<comment type="catalytic activity">
    <reaction evidence="1">
        <text>a quinone + NADH + H(+) = a quinol + NAD(+)</text>
        <dbReference type="Rhea" id="RHEA:46160"/>
        <dbReference type="ChEBI" id="CHEBI:15378"/>
        <dbReference type="ChEBI" id="CHEBI:24646"/>
        <dbReference type="ChEBI" id="CHEBI:57540"/>
        <dbReference type="ChEBI" id="CHEBI:57945"/>
        <dbReference type="ChEBI" id="CHEBI:132124"/>
        <dbReference type="EC" id="1.6.5.2"/>
    </reaction>
</comment>
<comment type="catalytic activity">
    <reaction evidence="1">
        <text>a quinone + NADPH + H(+) = a quinol + NADP(+)</text>
        <dbReference type="Rhea" id="RHEA:46164"/>
        <dbReference type="ChEBI" id="CHEBI:15378"/>
        <dbReference type="ChEBI" id="CHEBI:24646"/>
        <dbReference type="ChEBI" id="CHEBI:57783"/>
        <dbReference type="ChEBI" id="CHEBI:58349"/>
        <dbReference type="ChEBI" id="CHEBI:132124"/>
        <dbReference type="EC" id="1.6.5.2"/>
    </reaction>
</comment>
<comment type="cofactor">
    <cofactor evidence="1">
        <name>FMN</name>
        <dbReference type="ChEBI" id="CHEBI:58210"/>
    </cofactor>
    <text evidence="1">Binds 1 FMN per monomer.</text>
</comment>
<comment type="similarity">
    <text evidence="1">Belongs to the WrbA family.</text>
</comment>
<protein>
    <recommendedName>
        <fullName evidence="1">NAD(P)H dehydrogenase (quinone)</fullName>
        <ecNumber evidence="1">1.6.5.2</ecNumber>
    </recommendedName>
    <alternativeName>
        <fullName>Flavoprotein WrbA</fullName>
    </alternativeName>
    <alternativeName>
        <fullName evidence="1">NAD(P)H:quinone oxidoreductase</fullName>
        <shortName evidence="1">NQO</shortName>
    </alternativeName>
</protein>
<sequence length="200" mass="20955">MAKVLVLYYSSYGHVETMAQHVAEGAKSVPGVEVTLKRVPETIPADQAKAIGVKVDQAAPVATVDELPNYDAIIFGTPTRFGNMAGQMRTFLDQTGCLWMKGALVGKIGSVFASTGTQHGGQETTITSFHTTLLHQGMVIVGVPYACSGLVNMSEITGGTPYGATTLAGADGSRQPSANELDIARYQGKHVAELAVKLAS</sequence>
<feature type="chain" id="PRO_1000200616" description="NAD(P)H dehydrogenase (quinone)">
    <location>
        <begin position="1"/>
        <end position="200"/>
    </location>
</feature>
<feature type="domain" description="Flavodoxin-like" evidence="1">
    <location>
        <begin position="4"/>
        <end position="191"/>
    </location>
</feature>
<feature type="binding site" evidence="1">
    <location>
        <begin position="10"/>
        <end position="15"/>
    </location>
    <ligand>
        <name>FMN</name>
        <dbReference type="ChEBI" id="CHEBI:58210"/>
    </ligand>
</feature>
<feature type="binding site" evidence="1">
    <location>
        <position position="12"/>
    </location>
    <ligand>
        <name>NAD(+)</name>
        <dbReference type="ChEBI" id="CHEBI:57540"/>
    </ligand>
</feature>
<feature type="binding site" evidence="1">
    <location>
        <begin position="79"/>
        <end position="81"/>
    </location>
    <ligand>
        <name>FMN</name>
        <dbReference type="ChEBI" id="CHEBI:58210"/>
    </ligand>
</feature>
<feature type="binding site" evidence="1">
    <location>
        <position position="99"/>
    </location>
    <ligand>
        <name>substrate</name>
    </ligand>
</feature>
<feature type="binding site" evidence="1">
    <location>
        <begin position="114"/>
        <end position="120"/>
    </location>
    <ligand>
        <name>FMN</name>
        <dbReference type="ChEBI" id="CHEBI:58210"/>
    </ligand>
</feature>
<feature type="binding site" evidence="1">
    <location>
        <position position="135"/>
    </location>
    <ligand>
        <name>FMN</name>
        <dbReference type="ChEBI" id="CHEBI:58210"/>
    </ligand>
</feature>
<name>NQOR_BURA4</name>
<keyword id="KW-0285">Flavoprotein</keyword>
<keyword id="KW-0288">FMN</keyword>
<keyword id="KW-0520">NAD</keyword>
<keyword id="KW-0521">NADP</keyword>
<keyword id="KW-0547">Nucleotide-binding</keyword>
<keyword id="KW-0560">Oxidoreductase</keyword>
<gene>
    <name type="ordered locus">BamMC406_5841</name>
</gene>
<dbReference type="EC" id="1.6.5.2" evidence="1"/>
<dbReference type="EMBL" id="CP001027">
    <property type="protein sequence ID" value="ACB68282.1"/>
    <property type="molecule type" value="Genomic_DNA"/>
</dbReference>
<dbReference type="RefSeq" id="WP_012372192.1">
    <property type="nucleotide sequence ID" value="NC_010557.1"/>
</dbReference>
<dbReference type="SMR" id="B1Z3G9"/>
<dbReference type="CAZy" id="AA6">
    <property type="family name" value="Auxiliary Activities 6"/>
</dbReference>
<dbReference type="KEGG" id="bac:BamMC406_5841"/>
<dbReference type="HOGENOM" id="CLU_051402_0_2_4"/>
<dbReference type="OrthoDB" id="9801479at2"/>
<dbReference type="Proteomes" id="UP000001680">
    <property type="component" value="Chromosome 3"/>
</dbReference>
<dbReference type="GO" id="GO:0016020">
    <property type="term" value="C:membrane"/>
    <property type="evidence" value="ECO:0007669"/>
    <property type="project" value="TreeGrafter"/>
</dbReference>
<dbReference type="GO" id="GO:0050660">
    <property type="term" value="F:flavin adenine dinucleotide binding"/>
    <property type="evidence" value="ECO:0007669"/>
    <property type="project" value="UniProtKB-UniRule"/>
</dbReference>
<dbReference type="GO" id="GO:0010181">
    <property type="term" value="F:FMN binding"/>
    <property type="evidence" value="ECO:0007669"/>
    <property type="project" value="InterPro"/>
</dbReference>
<dbReference type="GO" id="GO:0051287">
    <property type="term" value="F:NAD binding"/>
    <property type="evidence" value="ECO:0007669"/>
    <property type="project" value="UniProtKB-UniRule"/>
</dbReference>
<dbReference type="GO" id="GO:0050136">
    <property type="term" value="F:NADH:ubiquinone reductase (non-electrogenic) activity"/>
    <property type="evidence" value="ECO:0007669"/>
    <property type="project" value="RHEA"/>
</dbReference>
<dbReference type="GO" id="GO:0050661">
    <property type="term" value="F:NADP binding"/>
    <property type="evidence" value="ECO:0007669"/>
    <property type="project" value="UniProtKB-UniRule"/>
</dbReference>
<dbReference type="GO" id="GO:0008753">
    <property type="term" value="F:NADPH dehydrogenase (quinone) activity"/>
    <property type="evidence" value="ECO:0007669"/>
    <property type="project" value="RHEA"/>
</dbReference>
<dbReference type="FunFam" id="3.40.50.360:FF:000001">
    <property type="entry name" value="NAD(P)H dehydrogenase (Quinone) FQR1-like"/>
    <property type="match status" value="1"/>
</dbReference>
<dbReference type="Gene3D" id="3.40.50.360">
    <property type="match status" value="1"/>
</dbReference>
<dbReference type="HAMAP" id="MF_01017">
    <property type="entry name" value="NQOR"/>
    <property type="match status" value="1"/>
</dbReference>
<dbReference type="InterPro" id="IPR008254">
    <property type="entry name" value="Flavodoxin/NO_synth"/>
</dbReference>
<dbReference type="InterPro" id="IPR029039">
    <property type="entry name" value="Flavoprotein-like_sf"/>
</dbReference>
<dbReference type="InterPro" id="IPR010089">
    <property type="entry name" value="Flavoprotein_WrbA-like"/>
</dbReference>
<dbReference type="InterPro" id="IPR005025">
    <property type="entry name" value="FMN_Rdtase-like_dom"/>
</dbReference>
<dbReference type="InterPro" id="IPR037513">
    <property type="entry name" value="NQO"/>
</dbReference>
<dbReference type="NCBIfam" id="TIGR01755">
    <property type="entry name" value="flav_wrbA"/>
    <property type="match status" value="1"/>
</dbReference>
<dbReference type="NCBIfam" id="NF002999">
    <property type="entry name" value="PRK03767.1"/>
    <property type="match status" value="1"/>
</dbReference>
<dbReference type="PANTHER" id="PTHR30546">
    <property type="entry name" value="FLAVODOXIN-RELATED PROTEIN WRBA-RELATED"/>
    <property type="match status" value="1"/>
</dbReference>
<dbReference type="PANTHER" id="PTHR30546:SF23">
    <property type="entry name" value="FLAVOPROTEIN-LIKE PROTEIN YCP4-RELATED"/>
    <property type="match status" value="1"/>
</dbReference>
<dbReference type="Pfam" id="PF03358">
    <property type="entry name" value="FMN_red"/>
    <property type="match status" value="1"/>
</dbReference>
<dbReference type="SUPFAM" id="SSF52218">
    <property type="entry name" value="Flavoproteins"/>
    <property type="match status" value="1"/>
</dbReference>
<dbReference type="PROSITE" id="PS50902">
    <property type="entry name" value="FLAVODOXIN_LIKE"/>
    <property type="match status" value="1"/>
</dbReference>